<protein>
    <recommendedName>
        <fullName evidence="1">Lysine--tRNA ligase</fullName>
        <ecNumber evidence="1">6.1.1.6</ecNumber>
    </recommendedName>
    <alternativeName>
        <fullName evidence="1">Lysyl-tRNA synthetase</fullName>
        <shortName evidence="1">LysRS</shortName>
    </alternativeName>
</protein>
<name>SYK_NITEU</name>
<organism>
    <name type="scientific">Nitrosomonas europaea (strain ATCC 19718 / CIP 103999 / KCTC 2705 / NBRC 14298)</name>
    <dbReference type="NCBI Taxonomy" id="228410"/>
    <lineage>
        <taxon>Bacteria</taxon>
        <taxon>Pseudomonadati</taxon>
        <taxon>Pseudomonadota</taxon>
        <taxon>Betaproteobacteria</taxon>
        <taxon>Nitrosomonadales</taxon>
        <taxon>Nitrosomonadaceae</taxon>
        <taxon>Nitrosomonas</taxon>
    </lineage>
</organism>
<feature type="chain" id="PRO_0000152660" description="Lysine--tRNA ligase">
    <location>
        <begin position="1"/>
        <end position="502"/>
    </location>
</feature>
<feature type="binding site" evidence="1">
    <location>
        <position position="412"/>
    </location>
    <ligand>
        <name>Mg(2+)</name>
        <dbReference type="ChEBI" id="CHEBI:18420"/>
        <label>1</label>
    </ligand>
</feature>
<feature type="binding site" evidence="1">
    <location>
        <position position="419"/>
    </location>
    <ligand>
        <name>Mg(2+)</name>
        <dbReference type="ChEBI" id="CHEBI:18420"/>
        <label>1</label>
    </ligand>
</feature>
<feature type="binding site" evidence="1">
    <location>
        <position position="419"/>
    </location>
    <ligand>
        <name>Mg(2+)</name>
        <dbReference type="ChEBI" id="CHEBI:18420"/>
        <label>2</label>
    </ligand>
</feature>
<gene>
    <name evidence="1" type="primary">lysS</name>
    <name type="ordered locus">NE2355</name>
</gene>
<accession>Q82SH1</accession>
<sequence length="502" mass="57476">MTQEEISGISQDENNLIAERRSKLTALRQTGNAFPNDYRRDNLARILHEKYDSCSREELESSQVTVKVAGRMLFKRVMGKASFATIQDMSGRIQLYISNDHTGETAHEAFRHYDLGDILGAEGVLFKTRTDELSLRVTQLHLLTKSLRPLPEKFHGLADQEQKYRRRYLDLITNEDTRRVFAIRSKIIQAIREFLVDRDYLEVETPMMHSIPGGATARPFVTHHNALDMSLYLRIAPELYLKRLVVGGMEKVFEINRNFRNEGISTRHNPEFTMLEFYEAYQDHNYLMDLTESMLREVALKVSGTTRIVYQQREMDLAQPFARLTIAQAILKYHPEYSDAQLNDRDFLTKALQAKGVTVNPDSGIGGLQLALFDETTEHLLFEPVFIVDYPAEVSPLARCNDANPEITDRFELYIAGREIANGFSELNDPEDQANRFLEQARAKEAGDLEAMHYDADYIQALEYGLPPTAGEGIGIDRLVMLLTDSPSIRDVILFPQLRKED</sequence>
<reference key="1">
    <citation type="journal article" date="2003" name="J. Bacteriol.">
        <title>Complete genome sequence of the ammonia-oxidizing bacterium and obligate chemolithoautotroph Nitrosomonas europaea.</title>
        <authorList>
            <person name="Chain P."/>
            <person name="Lamerdin J.E."/>
            <person name="Larimer F.W."/>
            <person name="Regala W."/>
            <person name="Lao V."/>
            <person name="Land M.L."/>
            <person name="Hauser L."/>
            <person name="Hooper A.B."/>
            <person name="Klotz M.G."/>
            <person name="Norton J."/>
            <person name="Sayavedra-Soto L.A."/>
            <person name="Arciero D.M."/>
            <person name="Hommes N.G."/>
            <person name="Whittaker M.M."/>
            <person name="Arp D.J."/>
        </authorList>
    </citation>
    <scope>NUCLEOTIDE SEQUENCE [LARGE SCALE GENOMIC DNA]</scope>
    <source>
        <strain>ATCC 19718 / CIP 103999 / KCTC 2705 / NBRC 14298</strain>
    </source>
</reference>
<comment type="catalytic activity">
    <reaction evidence="1">
        <text>tRNA(Lys) + L-lysine + ATP = L-lysyl-tRNA(Lys) + AMP + diphosphate</text>
        <dbReference type="Rhea" id="RHEA:20792"/>
        <dbReference type="Rhea" id="RHEA-COMP:9696"/>
        <dbReference type="Rhea" id="RHEA-COMP:9697"/>
        <dbReference type="ChEBI" id="CHEBI:30616"/>
        <dbReference type="ChEBI" id="CHEBI:32551"/>
        <dbReference type="ChEBI" id="CHEBI:33019"/>
        <dbReference type="ChEBI" id="CHEBI:78442"/>
        <dbReference type="ChEBI" id="CHEBI:78529"/>
        <dbReference type="ChEBI" id="CHEBI:456215"/>
        <dbReference type="EC" id="6.1.1.6"/>
    </reaction>
</comment>
<comment type="cofactor">
    <cofactor evidence="1">
        <name>Mg(2+)</name>
        <dbReference type="ChEBI" id="CHEBI:18420"/>
    </cofactor>
    <text evidence="1">Binds 3 Mg(2+) ions per subunit.</text>
</comment>
<comment type="subunit">
    <text evidence="1">Homodimer.</text>
</comment>
<comment type="subcellular location">
    <subcellularLocation>
        <location evidence="1">Cytoplasm</location>
    </subcellularLocation>
</comment>
<comment type="similarity">
    <text evidence="1">Belongs to the class-II aminoacyl-tRNA synthetase family.</text>
</comment>
<evidence type="ECO:0000255" key="1">
    <source>
        <dbReference type="HAMAP-Rule" id="MF_00252"/>
    </source>
</evidence>
<proteinExistence type="inferred from homology"/>
<keyword id="KW-0030">Aminoacyl-tRNA synthetase</keyword>
<keyword id="KW-0067">ATP-binding</keyword>
<keyword id="KW-0963">Cytoplasm</keyword>
<keyword id="KW-0436">Ligase</keyword>
<keyword id="KW-0460">Magnesium</keyword>
<keyword id="KW-0479">Metal-binding</keyword>
<keyword id="KW-0547">Nucleotide-binding</keyword>
<keyword id="KW-0648">Protein biosynthesis</keyword>
<keyword id="KW-1185">Reference proteome</keyword>
<dbReference type="EC" id="6.1.1.6" evidence="1"/>
<dbReference type="EMBL" id="AL954747">
    <property type="protein sequence ID" value="CAD86267.1"/>
    <property type="molecule type" value="Genomic_DNA"/>
</dbReference>
<dbReference type="RefSeq" id="WP_011112835.1">
    <property type="nucleotide sequence ID" value="NC_004757.1"/>
</dbReference>
<dbReference type="SMR" id="Q82SH1"/>
<dbReference type="STRING" id="228410.NE2355"/>
<dbReference type="GeneID" id="87105487"/>
<dbReference type="KEGG" id="neu:NE2355"/>
<dbReference type="eggNOG" id="COG1190">
    <property type="taxonomic scope" value="Bacteria"/>
</dbReference>
<dbReference type="HOGENOM" id="CLU_008255_6_0_4"/>
<dbReference type="OrthoDB" id="9801152at2"/>
<dbReference type="PhylomeDB" id="Q82SH1"/>
<dbReference type="Proteomes" id="UP000001416">
    <property type="component" value="Chromosome"/>
</dbReference>
<dbReference type="GO" id="GO:0005829">
    <property type="term" value="C:cytosol"/>
    <property type="evidence" value="ECO:0007669"/>
    <property type="project" value="TreeGrafter"/>
</dbReference>
<dbReference type="GO" id="GO:0005524">
    <property type="term" value="F:ATP binding"/>
    <property type="evidence" value="ECO:0007669"/>
    <property type="project" value="UniProtKB-UniRule"/>
</dbReference>
<dbReference type="GO" id="GO:0004824">
    <property type="term" value="F:lysine-tRNA ligase activity"/>
    <property type="evidence" value="ECO:0007669"/>
    <property type="project" value="UniProtKB-UniRule"/>
</dbReference>
<dbReference type="GO" id="GO:0000287">
    <property type="term" value="F:magnesium ion binding"/>
    <property type="evidence" value="ECO:0007669"/>
    <property type="project" value="UniProtKB-UniRule"/>
</dbReference>
<dbReference type="GO" id="GO:0000049">
    <property type="term" value="F:tRNA binding"/>
    <property type="evidence" value="ECO:0007669"/>
    <property type="project" value="TreeGrafter"/>
</dbReference>
<dbReference type="GO" id="GO:0006430">
    <property type="term" value="P:lysyl-tRNA aminoacylation"/>
    <property type="evidence" value="ECO:0007669"/>
    <property type="project" value="UniProtKB-UniRule"/>
</dbReference>
<dbReference type="CDD" id="cd00775">
    <property type="entry name" value="LysRS_core"/>
    <property type="match status" value="1"/>
</dbReference>
<dbReference type="CDD" id="cd04322">
    <property type="entry name" value="LysRS_N"/>
    <property type="match status" value="1"/>
</dbReference>
<dbReference type="FunFam" id="2.40.50.140:FF:000024">
    <property type="entry name" value="Lysine--tRNA ligase"/>
    <property type="match status" value="1"/>
</dbReference>
<dbReference type="FunFam" id="3.30.930.10:FF:000001">
    <property type="entry name" value="Lysine--tRNA ligase"/>
    <property type="match status" value="1"/>
</dbReference>
<dbReference type="Gene3D" id="3.30.930.10">
    <property type="entry name" value="Bira Bifunctional Protein, Domain 2"/>
    <property type="match status" value="1"/>
</dbReference>
<dbReference type="Gene3D" id="2.40.50.140">
    <property type="entry name" value="Nucleic acid-binding proteins"/>
    <property type="match status" value="1"/>
</dbReference>
<dbReference type="HAMAP" id="MF_00252">
    <property type="entry name" value="Lys_tRNA_synth_class2"/>
    <property type="match status" value="1"/>
</dbReference>
<dbReference type="InterPro" id="IPR004364">
    <property type="entry name" value="Aa-tRNA-synt_II"/>
</dbReference>
<dbReference type="InterPro" id="IPR006195">
    <property type="entry name" value="aa-tRNA-synth_II"/>
</dbReference>
<dbReference type="InterPro" id="IPR045864">
    <property type="entry name" value="aa-tRNA-synth_II/BPL/LPL"/>
</dbReference>
<dbReference type="InterPro" id="IPR002313">
    <property type="entry name" value="Lys-tRNA-ligase_II"/>
</dbReference>
<dbReference type="InterPro" id="IPR044136">
    <property type="entry name" value="Lys-tRNA-ligase_II_N"/>
</dbReference>
<dbReference type="InterPro" id="IPR018149">
    <property type="entry name" value="Lys-tRNA-synth_II_C"/>
</dbReference>
<dbReference type="InterPro" id="IPR012340">
    <property type="entry name" value="NA-bd_OB-fold"/>
</dbReference>
<dbReference type="InterPro" id="IPR004365">
    <property type="entry name" value="NA-bd_OB_tRNA"/>
</dbReference>
<dbReference type="NCBIfam" id="TIGR00499">
    <property type="entry name" value="lysS_bact"/>
    <property type="match status" value="1"/>
</dbReference>
<dbReference type="NCBIfam" id="NF001756">
    <property type="entry name" value="PRK00484.1"/>
    <property type="match status" value="1"/>
</dbReference>
<dbReference type="PANTHER" id="PTHR42918:SF15">
    <property type="entry name" value="LYSINE--TRNA LIGASE, CHLOROPLASTIC_MITOCHONDRIAL"/>
    <property type="match status" value="1"/>
</dbReference>
<dbReference type="PANTHER" id="PTHR42918">
    <property type="entry name" value="LYSYL-TRNA SYNTHETASE"/>
    <property type="match status" value="1"/>
</dbReference>
<dbReference type="Pfam" id="PF00152">
    <property type="entry name" value="tRNA-synt_2"/>
    <property type="match status" value="1"/>
</dbReference>
<dbReference type="Pfam" id="PF01336">
    <property type="entry name" value="tRNA_anti-codon"/>
    <property type="match status" value="1"/>
</dbReference>
<dbReference type="PRINTS" id="PR00982">
    <property type="entry name" value="TRNASYNTHLYS"/>
</dbReference>
<dbReference type="SUPFAM" id="SSF55681">
    <property type="entry name" value="Class II aaRS and biotin synthetases"/>
    <property type="match status" value="1"/>
</dbReference>
<dbReference type="SUPFAM" id="SSF50249">
    <property type="entry name" value="Nucleic acid-binding proteins"/>
    <property type="match status" value="1"/>
</dbReference>
<dbReference type="PROSITE" id="PS50862">
    <property type="entry name" value="AA_TRNA_LIGASE_II"/>
    <property type="match status" value="1"/>
</dbReference>